<gene>
    <name type="primary">pol</name>
</gene>
<organismHost>
    <name type="scientific">Mus musculus</name>
    <name type="common">Mouse</name>
    <dbReference type="NCBI Taxonomy" id="10090"/>
</organismHost>
<proteinExistence type="predicted"/>
<sequence length="116" mass="13029">AHLHALYLVHHEVWRPLAAAYQHQLDRPIVPHPFRLGDTVWVRRHQTNNLQPRWKAPYTVLLTTPTALKVDGIAAWIHAAHVKAATTPPAGTASGPTWKVQRSQNPLKIRLTRGAP</sequence>
<dbReference type="EC" id="2.7.7.-" evidence="1"/>
<dbReference type="EC" id="3.1.-.-" evidence="1"/>
<dbReference type="EMBL" id="K02375">
    <property type="protein sequence ID" value="AAA46504.1"/>
    <property type="molecule type" value="Genomic_RNA"/>
</dbReference>
<dbReference type="PIR" id="A05070">
    <property type="entry name" value="A05070"/>
</dbReference>
<dbReference type="SMR" id="P03358"/>
<dbReference type="GO" id="GO:0004519">
    <property type="term" value="F:endonuclease activity"/>
    <property type="evidence" value="ECO:0007669"/>
    <property type="project" value="UniProtKB-KW"/>
</dbReference>
<dbReference type="GO" id="GO:0016779">
    <property type="term" value="F:nucleotidyltransferase activity"/>
    <property type="evidence" value="ECO:0007669"/>
    <property type="project" value="UniProtKB-KW"/>
</dbReference>
<dbReference type="GO" id="GO:0015074">
    <property type="term" value="P:DNA integration"/>
    <property type="evidence" value="ECO:0007669"/>
    <property type="project" value="UniProtKB-KW"/>
</dbReference>
<dbReference type="GO" id="GO:0075713">
    <property type="term" value="P:establishment of integrated proviral latency"/>
    <property type="evidence" value="ECO:0007669"/>
    <property type="project" value="UniProtKB-KW"/>
</dbReference>
<dbReference type="GO" id="GO:0046718">
    <property type="term" value="P:symbiont entry into host cell"/>
    <property type="evidence" value="ECO:0007669"/>
    <property type="project" value="UniProtKB-KW"/>
</dbReference>
<dbReference type="GO" id="GO:0044826">
    <property type="term" value="P:viral genome integration into host DNA"/>
    <property type="evidence" value="ECO:0007669"/>
    <property type="project" value="UniProtKB-KW"/>
</dbReference>
<dbReference type="FunFam" id="2.30.30.850:FF:000001">
    <property type="entry name" value="Gag-Pol polyprotein"/>
    <property type="match status" value="1"/>
</dbReference>
<dbReference type="Gene3D" id="2.30.30.850">
    <property type="match status" value="1"/>
</dbReference>
<dbReference type="InterPro" id="IPR040643">
    <property type="entry name" value="MLVIN_C"/>
</dbReference>
<dbReference type="Pfam" id="PF18697">
    <property type="entry name" value="MLVIN_C"/>
    <property type="match status" value="1"/>
</dbReference>
<name>POL_RSFFV</name>
<accession>P03358</accession>
<reference key="1">
    <citation type="journal article" date="1984" name="J. Virol.">
        <title>Molecular cloning of biologically active Rauscher spleen focus-forming virus and the sequences of its env gene and long terminal repeat.</title>
        <authorList>
            <person name="Bestwick R.K."/>
            <person name="Boswell B.A."/>
            <person name="Kabat D."/>
        </authorList>
    </citation>
    <scope>NUCLEOTIDE SEQUENCE [GENOMIC RNA]</scope>
</reference>
<protein>
    <recommendedName>
        <fullName>Pol polyprotein</fullName>
    </recommendedName>
    <component>
        <recommendedName>
            <fullName>Integrase</fullName>
            <shortName>IN</shortName>
            <ecNumber evidence="1">2.7.7.-</ecNumber>
            <ecNumber evidence="1">3.1.-.-</ecNumber>
        </recommendedName>
    </component>
</protein>
<keyword id="KW-0229">DNA integration</keyword>
<keyword id="KW-0255">Endonuclease</keyword>
<keyword id="KW-0378">Hydrolase</keyword>
<keyword id="KW-0540">Nuclease</keyword>
<keyword id="KW-0548">Nucleotidyltransferase</keyword>
<keyword id="KW-0808">Transferase</keyword>
<keyword id="KW-1179">Viral genome integration</keyword>
<keyword id="KW-1160">Virus entry into host cell</keyword>
<organism>
    <name type="scientific">Rauscher spleen focus-forming virus</name>
    <name type="common">RSFFV</name>
    <dbReference type="NCBI Taxonomy" id="11821"/>
    <lineage>
        <taxon>Viruses</taxon>
        <taxon>Riboviria</taxon>
        <taxon>Pararnavirae</taxon>
        <taxon>Artverviricota</taxon>
        <taxon>Revtraviricetes</taxon>
        <taxon>Ortervirales</taxon>
        <taxon>Retroviridae</taxon>
        <taxon>Orthoretrovirinae</taxon>
        <taxon>Gammaretrovirus</taxon>
        <taxon>Spleen focus-forming virus</taxon>
    </lineage>
</organism>
<comment type="function">
    <molecule>Integrase</molecule>
    <text evidence="1">Catalyzes viral DNA integration into the host chromosome, by performing a series of DNA cutting and joining reactions.</text>
</comment>
<comment type="miscellaneous">
    <text>The Rauscher and Friend erythroleukemia viruses contain two components. The spleen focus-forming virus (SFFV) is replication defective, and causes foci of proliferating erythroid cells in spleens of infected mice. The second component is a replication competent murine leukemia virus (MuLV) that serves as a helper virus for SFFV.</text>
</comment>
<feature type="chain" id="PRO_0000442866" description="Integrase">
    <location>
        <begin position="1" status="less than"/>
        <end position="116"/>
    </location>
</feature>
<feature type="chain" id="PRO_0000125495" description="Pol polyprotein">
    <location>
        <begin position="1" status="less than"/>
        <end position="116"/>
    </location>
</feature>
<feature type="non-terminal residue">
    <location>
        <position position="1"/>
    </location>
</feature>
<evidence type="ECO:0000305" key="1"/>